<keyword id="KW-0963">Cytoplasm</keyword>
<keyword id="KW-0312">Gluconeogenesis</keyword>
<keyword id="KW-0324">Glycolysis</keyword>
<keyword id="KW-0413">Isomerase</keyword>
<keyword id="KW-1185">Reference proteome</keyword>
<comment type="function">
    <text evidence="1">Catalyzes the reversible isomerization of glucose-6-phosphate to fructose-6-phosphate.</text>
</comment>
<comment type="catalytic activity">
    <reaction evidence="1">
        <text>alpha-D-glucose 6-phosphate = beta-D-fructose 6-phosphate</text>
        <dbReference type="Rhea" id="RHEA:11816"/>
        <dbReference type="ChEBI" id="CHEBI:57634"/>
        <dbReference type="ChEBI" id="CHEBI:58225"/>
        <dbReference type="EC" id="5.3.1.9"/>
    </reaction>
</comment>
<comment type="pathway">
    <text evidence="1">Carbohydrate biosynthesis; gluconeogenesis.</text>
</comment>
<comment type="pathway">
    <text evidence="1">Carbohydrate degradation; glycolysis; D-glyceraldehyde 3-phosphate and glycerone phosphate from D-glucose: step 2/4.</text>
</comment>
<comment type="subcellular location">
    <subcellularLocation>
        <location evidence="1">Cytoplasm</location>
    </subcellularLocation>
</comment>
<comment type="similarity">
    <text evidence="1 2">Belongs to the GPI family.</text>
</comment>
<protein>
    <recommendedName>
        <fullName evidence="1">Glucose-6-phosphate isomerase</fullName>
        <shortName evidence="1">GPI</shortName>
        <ecNumber evidence="1">5.3.1.9</ecNumber>
    </recommendedName>
    <alternativeName>
        <fullName evidence="1">Phosphoglucose isomerase</fullName>
        <shortName evidence="1">PGI</shortName>
    </alternativeName>
    <alternativeName>
        <fullName evidence="1">Phosphohexose isomerase</fullName>
        <shortName evidence="1">PHI</shortName>
    </alternativeName>
</protein>
<proteinExistence type="inferred from homology"/>
<feature type="chain" id="PRO_0000180745" description="Glucose-6-phosphate isomerase">
    <location>
        <begin position="1"/>
        <end position="449"/>
    </location>
</feature>
<feature type="active site" description="Proton donor" evidence="1">
    <location>
        <position position="291"/>
    </location>
</feature>
<feature type="active site" evidence="1">
    <location>
        <position position="312"/>
    </location>
</feature>
<feature type="active site" evidence="1">
    <location>
        <position position="426"/>
    </location>
</feature>
<feature type="sequence conflict" description="In Ref. 1; AAL35379." evidence="2" ref="1">
    <original>AD</original>
    <variation>PN</variation>
    <location>
        <begin position="191"/>
        <end position="192"/>
    </location>
</feature>
<reference key="1">
    <citation type="submission" date="2001-11" db="EMBL/GenBank/DDBJ databases">
        <title>Modulation of glycolysis by lactose availability in Streptococcus thermophilus.</title>
        <authorList>
            <person name="van den Bogaard P.T.C."/>
            <person name="Kleerebezem M."/>
            <person name="Hols P."/>
            <person name="Crispie F."/>
            <person name="Kuipers O.P."/>
            <person name="de Vos W.M."/>
        </authorList>
    </citation>
    <scope>NUCLEOTIDE SEQUENCE [GENOMIC DNA]</scope>
</reference>
<reference key="2">
    <citation type="journal article" date="2004" name="Nat. Biotechnol.">
        <title>Complete sequence and comparative genome analysis of the dairy bacterium Streptococcus thermophilus.</title>
        <authorList>
            <person name="Bolotin A."/>
            <person name="Quinquis B."/>
            <person name="Renault P."/>
            <person name="Sorokin A."/>
            <person name="Ehrlich S.D."/>
            <person name="Kulakauskas S."/>
            <person name="Lapidus A."/>
            <person name="Goltsman E."/>
            <person name="Mazur M."/>
            <person name="Pusch G.D."/>
            <person name="Fonstein M."/>
            <person name="Overbeek R."/>
            <person name="Kyprides N."/>
            <person name="Purnelle B."/>
            <person name="Prozzi D."/>
            <person name="Ngui K."/>
            <person name="Masuy D."/>
            <person name="Hancy F."/>
            <person name="Burteau S."/>
            <person name="Boutry M."/>
            <person name="Delcour J."/>
            <person name="Goffeau A."/>
            <person name="Hols P."/>
        </authorList>
    </citation>
    <scope>NUCLEOTIDE SEQUENCE [LARGE SCALE GENOMIC DNA]</scope>
    <source>
        <strain>ATCC BAA-250 / LMG 18311</strain>
    </source>
</reference>
<accession>Q8VVB7</accession>
<accession>Q5M680</accession>
<name>G6PI_STRT2</name>
<evidence type="ECO:0000255" key="1">
    <source>
        <dbReference type="HAMAP-Rule" id="MF_00473"/>
    </source>
</evidence>
<evidence type="ECO:0000305" key="2"/>
<organism>
    <name type="scientific">Streptococcus thermophilus (strain ATCC BAA-250 / LMG 18311)</name>
    <dbReference type="NCBI Taxonomy" id="264199"/>
    <lineage>
        <taxon>Bacteria</taxon>
        <taxon>Bacillati</taxon>
        <taxon>Bacillota</taxon>
        <taxon>Bacilli</taxon>
        <taxon>Lactobacillales</taxon>
        <taxon>Streptococcaceae</taxon>
        <taxon>Streptococcus</taxon>
    </lineage>
</organism>
<gene>
    <name evidence="1" type="primary">pgi</name>
    <name type="ordered locus">stu0194</name>
</gene>
<dbReference type="EC" id="5.3.1.9" evidence="1"/>
<dbReference type="EMBL" id="AF442553">
    <property type="protein sequence ID" value="AAL35379.1"/>
    <property type="molecule type" value="Genomic_DNA"/>
</dbReference>
<dbReference type="EMBL" id="CP000023">
    <property type="protein sequence ID" value="AAV59919.1"/>
    <property type="molecule type" value="Genomic_DNA"/>
</dbReference>
<dbReference type="RefSeq" id="WP_011680683.1">
    <property type="nucleotide sequence ID" value="NC_006448.1"/>
</dbReference>
<dbReference type="SMR" id="Q8VVB7"/>
<dbReference type="STRING" id="264199.stu0194"/>
<dbReference type="KEGG" id="stl:stu0194"/>
<dbReference type="eggNOG" id="COG0166">
    <property type="taxonomic scope" value="Bacteria"/>
</dbReference>
<dbReference type="HOGENOM" id="CLU_037303_0_1_9"/>
<dbReference type="UniPathway" id="UPA00109">
    <property type="reaction ID" value="UER00181"/>
</dbReference>
<dbReference type="UniPathway" id="UPA00138"/>
<dbReference type="Proteomes" id="UP000001170">
    <property type="component" value="Chromosome"/>
</dbReference>
<dbReference type="GO" id="GO:0005829">
    <property type="term" value="C:cytosol"/>
    <property type="evidence" value="ECO:0007669"/>
    <property type="project" value="TreeGrafter"/>
</dbReference>
<dbReference type="GO" id="GO:0097367">
    <property type="term" value="F:carbohydrate derivative binding"/>
    <property type="evidence" value="ECO:0007669"/>
    <property type="project" value="InterPro"/>
</dbReference>
<dbReference type="GO" id="GO:0004347">
    <property type="term" value="F:glucose-6-phosphate isomerase activity"/>
    <property type="evidence" value="ECO:0007669"/>
    <property type="project" value="UniProtKB-UniRule"/>
</dbReference>
<dbReference type="GO" id="GO:0048029">
    <property type="term" value="F:monosaccharide binding"/>
    <property type="evidence" value="ECO:0007669"/>
    <property type="project" value="TreeGrafter"/>
</dbReference>
<dbReference type="GO" id="GO:0006094">
    <property type="term" value="P:gluconeogenesis"/>
    <property type="evidence" value="ECO:0007669"/>
    <property type="project" value="UniProtKB-UniRule"/>
</dbReference>
<dbReference type="GO" id="GO:0051156">
    <property type="term" value="P:glucose 6-phosphate metabolic process"/>
    <property type="evidence" value="ECO:0007669"/>
    <property type="project" value="TreeGrafter"/>
</dbReference>
<dbReference type="GO" id="GO:0006096">
    <property type="term" value="P:glycolytic process"/>
    <property type="evidence" value="ECO:0007669"/>
    <property type="project" value="UniProtKB-UniRule"/>
</dbReference>
<dbReference type="CDD" id="cd05015">
    <property type="entry name" value="SIS_PGI_1"/>
    <property type="match status" value="1"/>
</dbReference>
<dbReference type="CDD" id="cd05016">
    <property type="entry name" value="SIS_PGI_2"/>
    <property type="match status" value="1"/>
</dbReference>
<dbReference type="FunFam" id="3.40.50.10490:FF:000015">
    <property type="entry name" value="Glucose-6-phosphate isomerase"/>
    <property type="match status" value="1"/>
</dbReference>
<dbReference type="FunFam" id="3.40.50.10490:FF:000016">
    <property type="entry name" value="Glucose-6-phosphate isomerase"/>
    <property type="match status" value="1"/>
</dbReference>
<dbReference type="Gene3D" id="3.40.50.10490">
    <property type="entry name" value="Glucose-6-phosphate isomerase like protein, domain 1"/>
    <property type="match status" value="3"/>
</dbReference>
<dbReference type="HAMAP" id="MF_00473">
    <property type="entry name" value="G6P_isomerase"/>
    <property type="match status" value="1"/>
</dbReference>
<dbReference type="InterPro" id="IPR001672">
    <property type="entry name" value="G6P_Isomerase"/>
</dbReference>
<dbReference type="InterPro" id="IPR018189">
    <property type="entry name" value="Phosphoglucose_isomerase_CS"/>
</dbReference>
<dbReference type="InterPro" id="IPR046348">
    <property type="entry name" value="SIS_dom_sf"/>
</dbReference>
<dbReference type="InterPro" id="IPR035476">
    <property type="entry name" value="SIS_PGI_1"/>
</dbReference>
<dbReference type="InterPro" id="IPR035482">
    <property type="entry name" value="SIS_PGI_2"/>
</dbReference>
<dbReference type="NCBIfam" id="NF010697">
    <property type="entry name" value="PRK14097.1"/>
    <property type="match status" value="1"/>
</dbReference>
<dbReference type="PANTHER" id="PTHR11469">
    <property type="entry name" value="GLUCOSE-6-PHOSPHATE ISOMERASE"/>
    <property type="match status" value="1"/>
</dbReference>
<dbReference type="PANTHER" id="PTHR11469:SF1">
    <property type="entry name" value="GLUCOSE-6-PHOSPHATE ISOMERASE"/>
    <property type="match status" value="1"/>
</dbReference>
<dbReference type="Pfam" id="PF00342">
    <property type="entry name" value="PGI"/>
    <property type="match status" value="1"/>
</dbReference>
<dbReference type="PRINTS" id="PR00662">
    <property type="entry name" value="G6PISOMERASE"/>
</dbReference>
<dbReference type="SUPFAM" id="SSF53697">
    <property type="entry name" value="SIS domain"/>
    <property type="match status" value="1"/>
</dbReference>
<dbReference type="PROSITE" id="PS00765">
    <property type="entry name" value="P_GLUCOSE_ISOMERASE_1"/>
    <property type="match status" value="1"/>
</dbReference>
<dbReference type="PROSITE" id="PS00174">
    <property type="entry name" value="P_GLUCOSE_ISOMERASE_2"/>
    <property type="match status" value="1"/>
</dbReference>
<dbReference type="PROSITE" id="PS51463">
    <property type="entry name" value="P_GLUCOSE_ISOMERASE_3"/>
    <property type="match status" value="1"/>
</dbReference>
<sequence>MAHIKFDYSKVLDKFVAPHEVDNLQAQVTVADEMIRKGTGPGADFLGWRDLPENYDREEFDRILKAAEKIKEESDVLVVIGIGGSYLGAKAAIDFLSNHFANLQTKEERKAPQIVYAGNSISSTYLADLLEYVEGKDFSVNVISKSGTTTEPAIAFRLFKELLVKKYGQEEANKRIYATTDRQKGAVKVEADANGWETFVVPDDIGGRFSVLTAVGLLPIAVSGADIKALMEGANAARKEYSSSKISENEAYQYAAIRNILYRKGYTTEILANYEPSLQYFAEWWKQLAGESEGKDQRGIYPTSANFSTDLHSLGQFIQEGTRNLFETVVRVDKPRKNVVIPELAEDLDGLGYLQGKDVDFVNKKATDGVLLAHTDGDVPNMFITIPEQDAFTLGYIIYFFELAIALSGYLNAVNPFNQPGVEAYKKNMFALLGKPGFEELGAELNARL</sequence>